<dbReference type="PIR" id="A34947">
    <property type="entry name" value="A34947"/>
</dbReference>
<dbReference type="PDB" id="2ZFB">
    <property type="method" value="X-ray"/>
    <property type="resolution" value="3.00 A"/>
    <property type="chains" value="B=1-146"/>
</dbReference>
<dbReference type="PDBsum" id="2ZFB"/>
<dbReference type="SMR" id="P21668"/>
<dbReference type="EvolutionaryTrace" id="P21668"/>
<dbReference type="GO" id="GO:0072562">
    <property type="term" value="C:blood microparticle"/>
    <property type="evidence" value="ECO:0007669"/>
    <property type="project" value="TreeGrafter"/>
</dbReference>
<dbReference type="GO" id="GO:0031838">
    <property type="term" value="C:haptoglobin-hemoglobin complex"/>
    <property type="evidence" value="ECO:0007669"/>
    <property type="project" value="TreeGrafter"/>
</dbReference>
<dbReference type="GO" id="GO:0005833">
    <property type="term" value="C:hemoglobin complex"/>
    <property type="evidence" value="ECO:0007669"/>
    <property type="project" value="InterPro"/>
</dbReference>
<dbReference type="GO" id="GO:0031720">
    <property type="term" value="F:haptoglobin binding"/>
    <property type="evidence" value="ECO:0007669"/>
    <property type="project" value="TreeGrafter"/>
</dbReference>
<dbReference type="GO" id="GO:0020037">
    <property type="term" value="F:heme binding"/>
    <property type="evidence" value="ECO:0007669"/>
    <property type="project" value="InterPro"/>
</dbReference>
<dbReference type="GO" id="GO:0046872">
    <property type="term" value="F:metal ion binding"/>
    <property type="evidence" value="ECO:0007669"/>
    <property type="project" value="UniProtKB-KW"/>
</dbReference>
<dbReference type="GO" id="GO:0043177">
    <property type="term" value="F:organic acid binding"/>
    <property type="evidence" value="ECO:0007669"/>
    <property type="project" value="TreeGrafter"/>
</dbReference>
<dbReference type="GO" id="GO:0019825">
    <property type="term" value="F:oxygen binding"/>
    <property type="evidence" value="ECO:0007669"/>
    <property type="project" value="InterPro"/>
</dbReference>
<dbReference type="GO" id="GO:0005344">
    <property type="term" value="F:oxygen carrier activity"/>
    <property type="evidence" value="ECO:0007669"/>
    <property type="project" value="UniProtKB-KW"/>
</dbReference>
<dbReference type="GO" id="GO:0004601">
    <property type="term" value="F:peroxidase activity"/>
    <property type="evidence" value="ECO:0007669"/>
    <property type="project" value="TreeGrafter"/>
</dbReference>
<dbReference type="GO" id="GO:0042744">
    <property type="term" value="P:hydrogen peroxide catabolic process"/>
    <property type="evidence" value="ECO:0007669"/>
    <property type="project" value="TreeGrafter"/>
</dbReference>
<dbReference type="CDD" id="cd08925">
    <property type="entry name" value="Hb-beta-like"/>
    <property type="match status" value="1"/>
</dbReference>
<dbReference type="FunFam" id="1.10.490.10:FF:000001">
    <property type="entry name" value="Hemoglobin subunit beta"/>
    <property type="match status" value="1"/>
</dbReference>
<dbReference type="Gene3D" id="1.10.490.10">
    <property type="entry name" value="Globins"/>
    <property type="match status" value="1"/>
</dbReference>
<dbReference type="InterPro" id="IPR000971">
    <property type="entry name" value="Globin"/>
</dbReference>
<dbReference type="InterPro" id="IPR009050">
    <property type="entry name" value="Globin-like_sf"/>
</dbReference>
<dbReference type="InterPro" id="IPR012292">
    <property type="entry name" value="Globin/Proto"/>
</dbReference>
<dbReference type="InterPro" id="IPR002337">
    <property type="entry name" value="Hemoglobin_b"/>
</dbReference>
<dbReference type="InterPro" id="IPR050056">
    <property type="entry name" value="Hemoglobin_oxygen_transport"/>
</dbReference>
<dbReference type="PANTHER" id="PTHR11442">
    <property type="entry name" value="HEMOGLOBIN FAMILY MEMBER"/>
    <property type="match status" value="1"/>
</dbReference>
<dbReference type="PANTHER" id="PTHR11442:SF7">
    <property type="entry name" value="HEMOGLOBIN SUBUNIT EPSILON"/>
    <property type="match status" value="1"/>
</dbReference>
<dbReference type="Pfam" id="PF00042">
    <property type="entry name" value="Globin"/>
    <property type="match status" value="1"/>
</dbReference>
<dbReference type="PRINTS" id="PR00814">
    <property type="entry name" value="BETAHAEM"/>
</dbReference>
<dbReference type="SUPFAM" id="SSF46458">
    <property type="entry name" value="Globin-like"/>
    <property type="match status" value="1"/>
</dbReference>
<dbReference type="PROSITE" id="PS01033">
    <property type="entry name" value="GLOBIN"/>
    <property type="match status" value="1"/>
</dbReference>
<protein>
    <recommendedName>
        <fullName>Hemoglobin subunit beta</fullName>
    </recommendedName>
    <alternativeName>
        <fullName>Beta-globin</fullName>
    </alternativeName>
    <alternativeName>
        <fullName>Hemoglobin beta chain</fullName>
    </alternativeName>
</protein>
<sequence length="146" mass="16192">VHWSAEEKQLITGLWGKVNVAECGAEALARLLIVYPWTQRFFTSFGNLSSASAVLGNPNVRAHGKKVLTSFGEAVKNLDNIKNTFAQLSELHCDKLHVDPENFRLLGDILIIVLAGHFGKDFTPDCQAAWQKLVRAVAHALARKYH</sequence>
<comment type="function">
    <text>Involved in oxygen transport from the lung to the various peripheral tissues.</text>
</comment>
<comment type="subunit">
    <text>Heterotetramer of two alpha chains and two beta chains.</text>
</comment>
<comment type="tissue specificity">
    <text>Red blood cells.</text>
</comment>
<comment type="similarity">
    <text evidence="1">Belongs to the globin family.</text>
</comment>
<feature type="chain" id="PRO_0000053081" description="Hemoglobin subunit beta">
    <location>
        <begin position="1"/>
        <end position="146"/>
    </location>
</feature>
<feature type="domain" description="Globin" evidence="1">
    <location>
        <begin position="2"/>
        <end position="146"/>
    </location>
</feature>
<feature type="binding site" description="distal binding residue">
    <location>
        <position position="63"/>
    </location>
    <ligand>
        <name>heme b</name>
        <dbReference type="ChEBI" id="CHEBI:60344"/>
    </ligand>
    <ligandPart>
        <name>Fe</name>
        <dbReference type="ChEBI" id="CHEBI:18248"/>
    </ligandPart>
</feature>
<feature type="binding site" description="proximal binding residue">
    <location>
        <position position="92"/>
    </location>
    <ligand>
        <name>heme b</name>
        <dbReference type="ChEBI" id="CHEBI:60344"/>
    </ligand>
    <ligandPart>
        <name>Fe</name>
        <dbReference type="ChEBI" id="CHEBI:18248"/>
    </ligandPart>
</feature>
<feature type="helix" evidence="2">
    <location>
        <begin position="5"/>
        <end position="15"/>
    </location>
</feature>
<feature type="helix" evidence="2">
    <location>
        <begin position="20"/>
        <end position="34"/>
    </location>
</feature>
<feature type="helix" evidence="2">
    <location>
        <begin position="36"/>
        <end position="45"/>
    </location>
</feature>
<feature type="helix" evidence="2">
    <location>
        <begin position="51"/>
        <end position="55"/>
    </location>
</feature>
<feature type="helix" evidence="2">
    <location>
        <begin position="58"/>
        <end position="77"/>
    </location>
</feature>
<feature type="turn" evidence="2">
    <location>
        <begin position="82"/>
        <end position="84"/>
    </location>
</feature>
<feature type="helix" evidence="2">
    <location>
        <begin position="86"/>
        <end position="94"/>
    </location>
</feature>
<feature type="helix" evidence="2">
    <location>
        <begin position="101"/>
        <end position="118"/>
    </location>
</feature>
<feature type="helix" evidence="2">
    <location>
        <begin position="119"/>
        <end position="121"/>
    </location>
</feature>
<feature type="helix" evidence="2">
    <location>
        <begin position="124"/>
        <end position="142"/>
    </location>
</feature>
<gene>
    <name type="primary">HBB</name>
</gene>
<name>HBB_PSIKR</name>
<keyword id="KW-0002">3D-structure</keyword>
<keyword id="KW-0903">Direct protein sequencing</keyword>
<keyword id="KW-0349">Heme</keyword>
<keyword id="KW-0408">Iron</keyword>
<keyword id="KW-0479">Metal-binding</keyword>
<keyword id="KW-0561">Oxygen transport</keyword>
<keyword id="KW-0813">Transport</keyword>
<proteinExistence type="evidence at protein level"/>
<evidence type="ECO:0000255" key="1">
    <source>
        <dbReference type="PROSITE-ProRule" id="PRU00238"/>
    </source>
</evidence>
<evidence type="ECO:0007829" key="2">
    <source>
        <dbReference type="PDB" id="2ZFB"/>
    </source>
</evidence>
<accession>P21668</accession>
<reference key="1">
    <citation type="journal article" date="1989" name="J. Protein Chem.">
        <title>Primary structure of the hemoglobin beta-chain of rose-ringed parakeet (Psittacula krameri).</title>
        <authorList>
            <person name="Islam A."/>
            <person name="Persson B."/>
            <person name="Zaidi Z.H."/>
            <person name="Joernvall H."/>
        </authorList>
    </citation>
    <scope>PROTEIN SEQUENCE</scope>
</reference>
<organism>
    <name type="scientific">Psittacula krameri</name>
    <name type="common">Rose-ringed parakeet</name>
    <dbReference type="NCBI Taxonomy" id="9228"/>
    <lineage>
        <taxon>Eukaryota</taxon>
        <taxon>Metazoa</taxon>
        <taxon>Chordata</taxon>
        <taxon>Craniata</taxon>
        <taxon>Vertebrata</taxon>
        <taxon>Euteleostomi</taxon>
        <taxon>Archelosauria</taxon>
        <taxon>Archosauria</taxon>
        <taxon>Dinosauria</taxon>
        <taxon>Saurischia</taxon>
        <taxon>Theropoda</taxon>
        <taxon>Coelurosauria</taxon>
        <taxon>Aves</taxon>
        <taxon>Neognathae</taxon>
        <taxon>Neoaves</taxon>
        <taxon>Telluraves</taxon>
        <taxon>Australaves</taxon>
        <taxon>Psittaciformes</taxon>
        <taxon>Psittacidae</taxon>
        <taxon>Psittacula</taxon>
    </lineage>
</organism>